<comment type="catalytic activity">
    <reaction>
        <text>dTMP + ATP = dTDP + ADP</text>
        <dbReference type="Rhea" id="RHEA:13517"/>
        <dbReference type="ChEBI" id="CHEBI:30616"/>
        <dbReference type="ChEBI" id="CHEBI:58369"/>
        <dbReference type="ChEBI" id="CHEBI:63528"/>
        <dbReference type="ChEBI" id="CHEBI:456216"/>
        <dbReference type="EC" id="2.7.4.9"/>
    </reaction>
</comment>
<comment type="pathway">
    <text>Pyrimidine metabolism; dTTP biosynthesis.</text>
</comment>
<comment type="similarity">
    <text evidence="1">Belongs to the thymidylate kinase family.</text>
</comment>
<comment type="sequence caution" evidence="1">
    <conflict type="erroneous initiation">
        <sequence resource="EMBL-CDS" id="AAM92452"/>
    </conflict>
</comment>
<reference key="1">
    <citation type="journal article" date="2003" name="Virology">
        <title>The genomic sequence of Ectromelia virus, the causative agent of mousepox.</title>
        <authorList>
            <person name="Chen N."/>
            <person name="Danila M.I."/>
            <person name="Feng Z."/>
            <person name="Buller R.M."/>
            <person name="Wang C."/>
            <person name="Han X."/>
            <person name="Lefkowitz E.J."/>
            <person name="Upton C."/>
        </authorList>
    </citation>
    <scope>NUCLEOTIDE SEQUENCE [LARGE SCALE GENOMIC DNA]</scope>
</reference>
<gene>
    <name type="primary">TMK</name>
    <name type="ordered locus">EVM147</name>
</gene>
<proteinExistence type="inferred from homology"/>
<protein>
    <recommendedName>
        <fullName>Thymidylate kinase</fullName>
        <ecNumber>2.7.4.9</ecNumber>
    </recommendedName>
    <alternativeName>
        <fullName>dTMP kinase</fullName>
    </alternativeName>
</protein>
<evidence type="ECO:0000305" key="1"/>
<keyword id="KW-0067">ATP-binding</keyword>
<keyword id="KW-0418">Kinase</keyword>
<keyword id="KW-0545">Nucleotide biosynthesis</keyword>
<keyword id="KW-0547">Nucleotide-binding</keyword>
<keyword id="KW-0808">Transferase</keyword>
<feature type="chain" id="PRO_0000155225" description="Thymidylate kinase">
    <location>
        <begin position="1"/>
        <end position="204"/>
    </location>
</feature>
<feature type="binding site" evidence="1">
    <location>
        <begin position="11"/>
        <end position="18"/>
    </location>
    <ligand>
        <name>ATP</name>
        <dbReference type="ChEBI" id="CHEBI:30616"/>
    </ligand>
</feature>
<sequence length="204" mass="23291">MSRGALIVFEGLDKSGKTTQCMNIMESIPSNTIKYLNFPQRSTVTGKMIDDYLTRKKTYNDHIVNLLFCANRWEFASFIQEQLEQGITLIVDRYAFSGVAYAAAKGAPMTLSKSYESGLPKPDLVIFLESGSKEINRNVGEEIYEDVEFQQKVLQEYKKMIEEGDIHWQIISSEFEEDVKKELIKNIVIEAMHTVTGPVGQLWM</sequence>
<accession>Q8JL72</accession>
<name>KTHY_ECTVM</name>
<organism>
    <name type="scientific">Ectromelia virus (strain Moscow)</name>
    <name type="common">ECTV</name>
    <name type="synonym">Mousepox virus</name>
    <dbReference type="NCBI Taxonomy" id="265874"/>
    <lineage>
        <taxon>Viruses</taxon>
        <taxon>Varidnaviria</taxon>
        <taxon>Bamfordvirae</taxon>
        <taxon>Nucleocytoviricota</taxon>
        <taxon>Pokkesviricetes</taxon>
        <taxon>Chitovirales</taxon>
        <taxon>Poxviridae</taxon>
        <taxon>Chordopoxvirinae</taxon>
        <taxon>Orthopoxvirus</taxon>
        <taxon>Ectromelia virus</taxon>
    </lineage>
</organism>
<organismHost>
    <name type="scientific">Mus musculus</name>
    <name type="common">Mouse</name>
    <dbReference type="NCBI Taxonomy" id="10090"/>
</organismHost>
<dbReference type="EC" id="2.7.4.9"/>
<dbReference type="EMBL" id="AF012825">
    <property type="protein sequence ID" value="AAM92452.1"/>
    <property type="status" value="ALT_INIT"/>
    <property type="molecule type" value="Genomic_DNA"/>
</dbReference>
<dbReference type="RefSeq" id="NP_671666.1">
    <property type="nucleotide sequence ID" value="NC_004105.1"/>
</dbReference>
<dbReference type="SMR" id="Q8JL72"/>
<dbReference type="GeneID" id="951550"/>
<dbReference type="KEGG" id="vg:951550"/>
<dbReference type="UniPathway" id="UPA00575"/>
<dbReference type="Proteomes" id="UP000172110">
    <property type="component" value="Segment"/>
</dbReference>
<dbReference type="GO" id="GO:0005524">
    <property type="term" value="F:ATP binding"/>
    <property type="evidence" value="ECO:0007669"/>
    <property type="project" value="UniProtKB-KW"/>
</dbReference>
<dbReference type="GO" id="GO:0004798">
    <property type="term" value="F:dTMP kinase activity"/>
    <property type="evidence" value="ECO:0007669"/>
    <property type="project" value="UniProtKB-EC"/>
</dbReference>
<dbReference type="GO" id="GO:0004550">
    <property type="term" value="F:nucleoside diphosphate kinase activity"/>
    <property type="evidence" value="ECO:0007669"/>
    <property type="project" value="TreeGrafter"/>
</dbReference>
<dbReference type="GO" id="GO:0006233">
    <property type="term" value="P:dTDP biosynthetic process"/>
    <property type="evidence" value="ECO:0007669"/>
    <property type="project" value="InterPro"/>
</dbReference>
<dbReference type="GO" id="GO:0006235">
    <property type="term" value="P:dTTP biosynthetic process"/>
    <property type="evidence" value="ECO:0007669"/>
    <property type="project" value="UniProtKB-UniPathway"/>
</dbReference>
<dbReference type="GO" id="GO:0006227">
    <property type="term" value="P:dUDP biosynthetic process"/>
    <property type="evidence" value="ECO:0007669"/>
    <property type="project" value="TreeGrafter"/>
</dbReference>
<dbReference type="Gene3D" id="3.40.50.300">
    <property type="entry name" value="P-loop containing nucleotide triphosphate hydrolases"/>
    <property type="match status" value="1"/>
</dbReference>
<dbReference type="InterPro" id="IPR027417">
    <property type="entry name" value="P-loop_NTPase"/>
</dbReference>
<dbReference type="InterPro" id="IPR039430">
    <property type="entry name" value="Thymidylate_kin-like_dom"/>
</dbReference>
<dbReference type="InterPro" id="IPR018095">
    <property type="entry name" value="Thymidylate_kin_CS"/>
</dbReference>
<dbReference type="InterPro" id="IPR018094">
    <property type="entry name" value="Thymidylate_kinase"/>
</dbReference>
<dbReference type="NCBIfam" id="TIGR00041">
    <property type="entry name" value="DTMP_kinase"/>
    <property type="match status" value="1"/>
</dbReference>
<dbReference type="PANTHER" id="PTHR10344">
    <property type="entry name" value="THYMIDYLATE KINASE"/>
    <property type="match status" value="1"/>
</dbReference>
<dbReference type="PANTHER" id="PTHR10344:SF1">
    <property type="entry name" value="THYMIDYLATE KINASE"/>
    <property type="match status" value="1"/>
</dbReference>
<dbReference type="Pfam" id="PF02223">
    <property type="entry name" value="Thymidylate_kin"/>
    <property type="match status" value="1"/>
</dbReference>
<dbReference type="SUPFAM" id="SSF52540">
    <property type="entry name" value="P-loop containing nucleoside triphosphate hydrolases"/>
    <property type="match status" value="1"/>
</dbReference>
<dbReference type="PROSITE" id="PS01331">
    <property type="entry name" value="THYMIDYLATE_KINASE"/>
    <property type="match status" value="1"/>
</dbReference>